<evidence type="ECO:0000255" key="1">
    <source>
        <dbReference type="HAMAP-Rule" id="MF_00379"/>
    </source>
</evidence>
<dbReference type="EC" id="3.6.-.-" evidence="1"/>
<dbReference type="EMBL" id="CP000879">
    <property type="protein sequence ID" value="ABX32112.1"/>
    <property type="molecule type" value="Genomic_DNA"/>
</dbReference>
<dbReference type="RefSeq" id="WP_012209211.1">
    <property type="nucleotide sequence ID" value="NC_010003.1"/>
</dbReference>
<dbReference type="SMR" id="A9BHZ7"/>
<dbReference type="STRING" id="403833.Pmob_1409"/>
<dbReference type="KEGG" id="pmo:Pmob_1409"/>
<dbReference type="eggNOG" id="COG0486">
    <property type="taxonomic scope" value="Bacteria"/>
</dbReference>
<dbReference type="HOGENOM" id="CLU_019624_4_1_0"/>
<dbReference type="OrthoDB" id="9805918at2"/>
<dbReference type="Proteomes" id="UP000000789">
    <property type="component" value="Chromosome"/>
</dbReference>
<dbReference type="GO" id="GO:0005829">
    <property type="term" value="C:cytosol"/>
    <property type="evidence" value="ECO:0007669"/>
    <property type="project" value="TreeGrafter"/>
</dbReference>
<dbReference type="GO" id="GO:0005525">
    <property type="term" value="F:GTP binding"/>
    <property type="evidence" value="ECO:0007669"/>
    <property type="project" value="UniProtKB-UniRule"/>
</dbReference>
<dbReference type="GO" id="GO:0003924">
    <property type="term" value="F:GTPase activity"/>
    <property type="evidence" value="ECO:0007669"/>
    <property type="project" value="UniProtKB-UniRule"/>
</dbReference>
<dbReference type="GO" id="GO:0046872">
    <property type="term" value="F:metal ion binding"/>
    <property type="evidence" value="ECO:0007669"/>
    <property type="project" value="UniProtKB-KW"/>
</dbReference>
<dbReference type="GO" id="GO:0030488">
    <property type="term" value="P:tRNA methylation"/>
    <property type="evidence" value="ECO:0007669"/>
    <property type="project" value="TreeGrafter"/>
</dbReference>
<dbReference type="GO" id="GO:0002098">
    <property type="term" value="P:tRNA wobble uridine modification"/>
    <property type="evidence" value="ECO:0007669"/>
    <property type="project" value="TreeGrafter"/>
</dbReference>
<dbReference type="CDD" id="cd04164">
    <property type="entry name" value="trmE"/>
    <property type="match status" value="1"/>
</dbReference>
<dbReference type="CDD" id="cd14858">
    <property type="entry name" value="TrmE_N"/>
    <property type="match status" value="1"/>
</dbReference>
<dbReference type="FunFam" id="3.40.50.300:FF:001376">
    <property type="entry name" value="tRNA modification GTPase MnmE"/>
    <property type="match status" value="1"/>
</dbReference>
<dbReference type="Gene3D" id="3.40.50.300">
    <property type="entry name" value="P-loop containing nucleotide triphosphate hydrolases"/>
    <property type="match status" value="1"/>
</dbReference>
<dbReference type="Gene3D" id="3.30.1360.120">
    <property type="entry name" value="Probable tRNA modification gtpase trme, domain 1"/>
    <property type="match status" value="1"/>
</dbReference>
<dbReference type="Gene3D" id="1.20.120.430">
    <property type="entry name" value="tRNA modification GTPase MnmE domain 2"/>
    <property type="match status" value="1"/>
</dbReference>
<dbReference type="HAMAP" id="MF_00379">
    <property type="entry name" value="GTPase_MnmE"/>
    <property type="match status" value="1"/>
</dbReference>
<dbReference type="InterPro" id="IPR031168">
    <property type="entry name" value="G_TrmE"/>
</dbReference>
<dbReference type="InterPro" id="IPR006073">
    <property type="entry name" value="GTP-bd"/>
</dbReference>
<dbReference type="InterPro" id="IPR018948">
    <property type="entry name" value="GTP-bd_TrmE_N"/>
</dbReference>
<dbReference type="InterPro" id="IPR004520">
    <property type="entry name" value="GTPase_MnmE"/>
</dbReference>
<dbReference type="InterPro" id="IPR027368">
    <property type="entry name" value="MnmE_dom2"/>
</dbReference>
<dbReference type="InterPro" id="IPR025867">
    <property type="entry name" value="MnmE_helical"/>
</dbReference>
<dbReference type="InterPro" id="IPR027417">
    <property type="entry name" value="P-loop_NTPase"/>
</dbReference>
<dbReference type="InterPro" id="IPR005225">
    <property type="entry name" value="Small_GTP-bd"/>
</dbReference>
<dbReference type="InterPro" id="IPR027266">
    <property type="entry name" value="TrmE/GcvT_dom1"/>
</dbReference>
<dbReference type="NCBIfam" id="TIGR00450">
    <property type="entry name" value="mnmE_trmE_thdF"/>
    <property type="match status" value="1"/>
</dbReference>
<dbReference type="NCBIfam" id="TIGR00231">
    <property type="entry name" value="small_GTP"/>
    <property type="match status" value="1"/>
</dbReference>
<dbReference type="PANTHER" id="PTHR42714">
    <property type="entry name" value="TRNA MODIFICATION GTPASE GTPBP3"/>
    <property type="match status" value="1"/>
</dbReference>
<dbReference type="PANTHER" id="PTHR42714:SF2">
    <property type="entry name" value="TRNA MODIFICATION GTPASE GTPBP3, MITOCHONDRIAL"/>
    <property type="match status" value="1"/>
</dbReference>
<dbReference type="Pfam" id="PF01926">
    <property type="entry name" value="MMR_HSR1"/>
    <property type="match status" value="1"/>
</dbReference>
<dbReference type="Pfam" id="PF12631">
    <property type="entry name" value="MnmE_helical"/>
    <property type="match status" value="1"/>
</dbReference>
<dbReference type="Pfam" id="PF10396">
    <property type="entry name" value="TrmE_N"/>
    <property type="match status" value="1"/>
</dbReference>
<dbReference type="PRINTS" id="PR00326">
    <property type="entry name" value="GTP1OBG"/>
</dbReference>
<dbReference type="SUPFAM" id="SSF52540">
    <property type="entry name" value="P-loop containing nucleoside triphosphate hydrolases"/>
    <property type="match status" value="1"/>
</dbReference>
<dbReference type="PROSITE" id="PS51709">
    <property type="entry name" value="G_TRME"/>
    <property type="match status" value="1"/>
</dbReference>
<protein>
    <recommendedName>
        <fullName evidence="1">tRNA modification GTPase MnmE</fullName>
        <ecNumber evidence="1">3.6.-.-</ecNumber>
    </recommendedName>
</protein>
<comment type="function">
    <text evidence="1">Exhibits a very high intrinsic GTPase hydrolysis rate. Involved in the addition of a carboxymethylaminomethyl (cmnm) group at the wobble position (U34) of certain tRNAs, forming tRNA-cmnm(5)s(2)U34.</text>
</comment>
<comment type="cofactor">
    <cofactor evidence="1">
        <name>K(+)</name>
        <dbReference type="ChEBI" id="CHEBI:29103"/>
    </cofactor>
    <text evidence="1">Binds 1 potassium ion per subunit.</text>
</comment>
<comment type="subunit">
    <text evidence="1">Homodimer. Heterotetramer of two MnmE and two MnmG subunits.</text>
</comment>
<comment type="subcellular location">
    <subcellularLocation>
        <location evidence="1">Cytoplasm</location>
    </subcellularLocation>
</comment>
<comment type="similarity">
    <text evidence="1">Belongs to the TRAFAC class TrmE-Era-EngA-EngB-Septin-like GTPase superfamily. TrmE GTPase family.</text>
</comment>
<feature type="chain" id="PRO_0000345868" description="tRNA modification GTPase MnmE">
    <location>
        <begin position="1"/>
        <end position="452"/>
    </location>
</feature>
<feature type="domain" description="TrmE-type G">
    <location>
        <begin position="213"/>
        <end position="375"/>
    </location>
</feature>
<feature type="binding site" evidence="1">
    <location>
        <position position="22"/>
    </location>
    <ligand>
        <name>(6S)-5-formyl-5,6,7,8-tetrahydrofolate</name>
        <dbReference type="ChEBI" id="CHEBI:57457"/>
    </ligand>
</feature>
<feature type="binding site" evidence="1">
    <location>
        <position position="80"/>
    </location>
    <ligand>
        <name>(6S)-5-formyl-5,6,7,8-tetrahydrofolate</name>
        <dbReference type="ChEBI" id="CHEBI:57457"/>
    </ligand>
</feature>
<feature type="binding site" evidence="1">
    <location>
        <position position="119"/>
    </location>
    <ligand>
        <name>(6S)-5-formyl-5,6,7,8-tetrahydrofolate</name>
        <dbReference type="ChEBI" id="CHEBI:57457"/>
    </ligand>
</feature>
<feature type="binding site" evidence="1">
    <location>
        <begin position="223"/>
        <end position="228"/>
    </location>
    <ligand>
        <name>GTP</name>
        <dbReference type="ChEBI" id="CHEBI:37565"/>
    </ligand>
</feature>
<feature type="binding site" evidence="1">
    <location>
        <position position="223"/>
    </location>
    <ligand>
        <name>K(+)</name>
        <dbReference type="ChEBI" id="CHEBI:29103"/>
    </ligand>
</feature>
<feature type="binding site" evidence="1">
    <location>
        <position position="227"/>
    </location>
    <ligand>
        <name>Mg(2+)</name>
        <dbReference type="ChEBI" id="CHEBI:18420"/>
    </ligand>
</feature>
<feature type="binding site" evidence="1">
    <location>
        <begin position="242"/>
        <end position="248"/>
    </location>
    <ligand>
        <name>GTP</name>
        <dbReference type="ChEBI" id="CHEBI:37565"/>
    </ligand>
</feature>
<feature type="binding site" evidence="1">
    <location>
        <position position="242"/>
    </location>
    <ligand>
        <name>K(+)</name>
        <dbReference type="ChEBI" id="CHEBI:29103"/>
    </ligand>
</feature>
<feature type="binding site" evidence="1">
    <location>
        <position position="244"/>
    </location>
    <ligand>
        <name>K(+)</name>
        <dbReference type="ChEBI" id="CHEBI:29103"/>
    </ligand>
</feature>
<feature type="binding site" evidence="1">
    <location>
        <position position="247"/>
    </location>
    <ligand>
        <name>K(+)</name>
        <dbReference type="ChEBI" id="CHEBI:29103"/>
    </ligand>
</feature>
<feature type="binding site" evidence="1">
    <location>
        <position position="248"/>
    </location>
    <ligand>
        <name>Mg(2+)</name>
        <dbReference type="ChEBI" id="CHEBI:18420"/>
    </ligand>
</feature>
<feature type="binding site" evidence="1">
    <location>
        <begin position="267"/>
        <end position="270"/>
    </location>
    <ligand>
        <name>GTP</name>
        <dbReference type="ChEBI" id="CHEBI:37565"/>
    </ligand>
</feature>
<feature type="binding site" evidence="1">
    <location>
        <position position="452"/>
    </location>
    <ligand>
        <name>(6S)-5-formyl-5,6,7,8-tetrahydrofolate</name>
        <dbReference type="ChEBI" id="CHEBI:57457"/>
    </ligand>
</feature>
<proteinExistence type="inferred from homology"/>
<reference key="1">
    <citation type="submission" date="2007-11" db="EMBL/GenBank/DDBJ databases">
        <title>Complete sequence of Petroga mobilis SJ95.</title>
        <authorList>
            <consortium name="US DOE Joint Genome Institute"/>
            <person name="Copeland A."/>
            <person name="Lucas S."/>
            <person name="Lapidus A."/>
            <person name="Barry K."/>
            <person name="Glavina del Rio T."/>
            <person name="Dalin E."/>
            <person name="Tice H."/>
            <person name="Pitluck S."/>
            <person name="Meincke L."/>
            <person name="Brettin T."/>
            <person name="Bruce D."/>
            <person name="Detter J.C."/>
            <person name="Han C."/>
            <person name="Kuske C.R."/>
            <person name="Schmutz J."/>
            <person name="Larimer F."/>
            <person name="Land M."/>
            <person name="Hauser L."/>
            <person name="Kyrpides N."/>
            <person name="Mikhailova N."/>
            <person name="Noll K."/>
            <person name="Richardson P."/>
        </authorList>
    </citation>
    <scope>NUCLEOTIDE SEQUENCE [LARGE SCALE GENOMIC DNA]</scope>
    <source>
        <strain>DSM 10674 / SJ95</strain>
    </source>
</reference>
<name>MNME_PETMO</name>
<sequence>MLNDTIVAISSPIGTGAIGVVRISGDHVKNIIDQALKRKKYTPKKMYYGWLYDKEGEKVDEITWVYHSQPHSYTGEDMLEIFCHGGKLITYAVLNTIIKYGARQALPGEFTKRAVLNGKMDLIKAEAVNNVITSETEISLKASFNQLKNAVSEKIKDIKNSLLNISAQIEVEMDYPDDIEFEDHDLKNKLVHIVNSMNQLLKEAENGIIAVEGVRTVIVGKPNSGKSTLLNALLRKDRAIVTDIPGTTRDTIEENLNINGIYIRLIDTAGIRYTEDTLERVGIERTINSIKNSHLILFVLDGTTPFTQEDELIYNKLNELGDKTVIIILNKSDSPNFTENNYLSLKQKNPNDFVIISAKNGAIKNLENKIYEKFFEKVNIEEPTLTNQRQKITLESSKEFVLNAINSLEKGFSNDIIMYDVRKALEKIYELSGENYTEELLDKIFSTFCVGK</sequence>
<organism>
    <name type="scientific">Petrotoga mobilis (strain DSM 10674 / SJ95)</name>
    <dbReference type="NCBI Taxonomy" id="403833"/>
    <lineage>
        <taxon>Bacteria</taxon>
        <taxon>Thermotogati</taxon>
        <taxon>Thermotogota</taxon>
        <taxon>Thermotogae</taxon>
        <taxon>Petrotogales</taxon>
        <taxon>Petrotogaceae</taxon>
        <taxon>Petrotoga</taxon>
    </lineage>
</organism>
<accession>A9BHZ7</accession>
<gene>
    <name evidence="1" type="primary">mnmE</name>
    <name evidence="1" type="synonym">trmE</name>
    <name type="ordered locus">Pmob_1409</name>
</gene>
<keyword id="KW-0963">Cytoplasm</keyword>
<keyword id="KW-0342">GTP-binding</keyword>
<keyword id="KW-0378">Hydrolase</keyword>
<keyword id="KW-0460">Magnesium</keyword>
<keyword id="KW-0479">Metal-binding</keyword>
<keyword id="KW-0547">Nucleotide-binding</keyword>
<keyword id="KW-0630">Potassium</keyword>
<keyword id="KW-0819">tRNA processing</keyword>